<comment type="function">
    <text evidence="1">Binds directly to 16S ribosomal RNA.</text>
</comment>
<comment type="similarity">
    <text evidence="1">Belongs to the bacterial ribosomal protein bS20 family.</text>
</comment>
<feature type="chain" id="PRO_1000126448" description="Small ribosomal subunit protein bS20">
    <location>
        <begin position="1"/>
        <end position="86"/>
    </location>
</feature>
<organism>
    <name type="scientific">Exiguobacterium sibiricum (strain DSM 17290 / CCUG 55495 / CIP 109462 / JCM 13490 / 255-15)</name>
    <dbReference type="NCBI Taxonomy" id="262543"/>
    <lineage>
        <taxon>Bacteria</taxon>
        <taxon>Bacillati</taxon>
        <taxon>Bacillota</taxon>
        <taxon>Bacilli</taxon>
        <taxon>Bacillales</taxon>
        <taxon>Bacillales Family XII. Incertae Sedis</taxon>
        <taxon>Exiguobacterium</taxon>
    </lineage>
</organism>
<accession>B1YKS4</accession>
<reference key="1">
    <citation type="submission" date="2008-04" db="EMBL/GenBank/DDBJ databases">
        <title>Complete sequence of chromosome of Exiguobacterium sibiricum 255-15.</title>
        <authorList>
            <consortium name="US DOE Joint Genome Institute"/>
            <person name="Copeland A."/>
            <person name="Lucas S."/>
            <person name="Lapidus A."/>
            <person name="Glavina del Rio T."/>
            <person name="Dalin E."/>
            <person name="Tice H."/>
            <person name="Bruce D."/>
            <person name="Goodwin L."/>
            <person name="Pitluck S."/>
            <person name="Kiss H."/>
            <person name="Chertkov O."/>
            <person name="Monk C."/>
            <person name="Brettin T."/>
            <person name="Detter J.C."/>
            <person name="Han C."/>
            <person name="Kuske C.R."/>
            <person name="Schmutz J."/>
            <person name="Larimer F."/>
            <person name="Land M."/>
            <person name="Hauser L."/>
            <person name="Kyrpides N."/>
            <person name="Mikhailova N."/>
            <person name="Vishnivetskaya T."/>
            <person name="Rodrigues D.F."/>
            <person name="Gilichinsky D."/>
            <person name="Tiedje J."/>
            <person name="Richardson P."/>
        </authorList>
    </citation>
    <scope>NUCLEOTIDE SEQUENCE [LARGE SCALE GENOMIC DNA]</scope>
    <source>
        <strain>DSM 17290 / CCUG 55495 / CIP 109462 / JCM 13490 / 255-15</strain>
    </source>
</reference>
<gene>
    <name evidence="1" type="primary">rpsT</name>
    <name type="ordered locus">Exig_0776</name>
</gene>
<name>RS20_EXIS2</name>
<sequence>MANIKSAIKRVKTAEKRRVANVQRKSSMRSAIKAVETFATEGNKEQALVAFNTASKKIDKAAAKGLIHSNKAGRDKSRLARLVNAL</sequence>
<dbReference type="EMBL" id="CP001022">
    <property type="protein sequence ID" value="ACB60257.1"/>
    <property type="molecule type" value="Genomic_DNA"/>
</dbReference>
<dbReference type="RefSeq" id="WP_012369681.1">
    <property type="nucleotide sequence ID" value="NC_010556.1"/>
</dbReference>
<dbReference type="SMR" id="B1YKS4"/>
<dbReference type="STRING" id="262543.Exig_0776"/>
<dbReference type="KEGG" id="esi:Exig_0776"/>
<dbReference type="eggNOG" id="COG0268">
    <property type="taxonomic scope" value="Bacteria"/>
</dbReference>
<dbReference type="HOGENOM" id="CLU_160655_0_1_9"/>
<dbReference type="OrthoDB" id="9808392at2"/>
<dbReference type="Proteomes" id="UP000001681">
    <property type="component" value="Chromosome"/>
</dbReference>
<dbReference type="GO" id="GO:0005829">
    <property type="term" value="C:cytosol"/>
    <property type="evidence" value="ECO:0007669"/>
    <property type="project" value="TreeGrafter"/>
</dbReference>
<dbReference type="GO" id="GO:0015935">
    <property type="term" value="C:small ribosomal subunit"/>
    <property type="evidence" value="ECO:0007669"/>
    <property type="project" value="TreeGrafter"/>
</dbReference>
<dbReference type="GO" id="GO:0070181">
    <property type="term" value="F:small ribosomal subunit rRNA binding"/>
    <property type="evidence" value="ECO:0007669"/>
    <property type="project" value="TreeGrafter"/>
</dbReference>
<dbReference type="GO" id="GO:0003735">
    <property type="term" value="F:structural constituent of ribosome"/>
    <property type="evidence" value="ECO:0007669"/>
    <property type="project" value="InterPro"/>
</dbReference>
<dbReference type="GO" id="GO:0006412">
    <property type="term" value="P:translation"/>
    <property type="evidence" value="ECO:0007669"/>
    <property type="project" value="UniProtKB-UniRule"/>
</dbReference>
<dbReference type="FunFam" id="1.20.58.110:FF:000001">
    <property type="entry name" value="30S ribosomal protein S20"/>
    <property type="match status" value="1"/>
</dbReference>
<dbReference type="Gene3D" id="1.20.58.110">
    <property type="entry name" value="Ribosomal protein S20"/>
    <property type="match status" value="1"/>
</dbReference>
<dbReference type="HAMAP" id="MF_00500">
    <property type="entry name" value="Ribosomal_bS20"/>
    <property type="match status" value="1"/>
</dbReference>
<dbReference type="InterPro" id="IPR002583">
    <property type="entry name" value="Ribosomal_bS20"/>
</dbReference>
<dbReference type="InterPro" id="IPR036510">
    <property type="entry name" value="Ribosomal_bS20_sf"/>
</dbReference>
<dbReference type="NCBIfam" id="TIGR00029">
    <property type="entry name" value="S20"/>
    <property type="match status" value="1"/>
</dbReference>
<dbReference type="PANTHER" id="PTHR33398">
    <property type="entry name" value="30S RIBOSOMAL PROTEIN S20"/>
    <property type="match status" value="1"/>
</dbReference>
<dbReference type="PANTHER" id="PTHR33398:SF1">
    <property type="entry name" value="SMALL RIBOSOMAL SUBUNIT PROTEIN BS20C"/>
    <property type="match status" value="1"/>
</dbReference>
<dbReference type="Pfam" id="PF01649">
    <property type="entry name" value="Ribosomal_S20p"/>
    <property type="match status" value="1"/>
</dbReference>
<dbReference type="SUPFAM" id="SSF46992">
    <property type="entry name" value="Ribosomal protein S20"/>
    <property type="match status" value="1"/>
</dbReference>
<protein>
    <recommendedName>
        <fullName evidence="1">Small ribosomal subunit protein bS20</fullName>
    </recommendedName>
    <alternativeName>
        <fullName evidence="2">30S ribosomal protein S20</fullName>
    </alternativeName>
</protein>
<keyword id="KW-1185">Reference proteome</keyword>
<keyword id="KW-0687">Ribonucleoprotein</keyword>
<keyword id="KW-0689">Ribosomal protein</keyword>
<keyword id="KW-0694">RNA-binding</keyword>
<keyword id="KW-0699">rRNA-binding</keyword>
<proteinExistence type="inferred from homology"/>
<evidence type="ECO:0000255" key="1">
    <source>
        <dbReference type="HAMAP-Rule" id="MF_00500"/>
    </source>
</evidence>
<evidence type="ECO:0000305" key="2"/>